<proteinExistence type="evidence at protein level"/>
<dbReference type="EMBL" id="CP000480">
    <property type="protein sequence ID" value="ABK75341.1"/>
    <property type="molecule type" value="Genomic_DNA"/>
</dbReference>
<dbReference type="EMBL" id="CP001663">
    <property type="protein sequence ID" value="AFP38511.1"/>
    <property type="molecule type" value="Genomic_DNA"/>
</dbReference>
<dbReference type="RefSeq" id="WP_011728139.1">
    <property type="nucleotide sequence ID" value="NZ_SIJM01000021.1"/>
</dbReference>
<dbReference type="RefSeq" id="YP_886446.1">
    <property type="nucleotide sequence ID" value="NC_008596.1"/>
</dbReference>
<dbReference type="SMR" id="A0QU58"/>
<dbReference type="STRING" id="246196.MSMEG_2086"/>
<dbReference type="PaxDb" id="246196-MSMEI_2040"/>
<dbReference type="GeneID" id="93456889"/>
<dbReference type="KEGG" id="msb:LJ00_10395"/>
<dbReference type="KEGG" id="msg:MSMEI_2040"/>
<dbReference type="KEGG" id="msm:MSMEG_2086"/>
<dbReference type="PATRIC" id="fig|246196.19.peg.2063"/>
<dbReference type="eggNOG" id="COG0216">
    <property type="taxonomic scope" value="Bacteria"/>
</dbReference>
<dbReference type="OrthoDB" id="9806673at2"/>
<dbReference type="Proteomes" id="UP000000757">
    <property type="component" value="Chromosome"/>
</dbReference>
<dbReference type="Proteomes" id="UP000006158">
    <property type="component" value="Chromosome"/>
</dbReference>
<dbReference type="GO" id="GO:0005737">
    <property type="term" value="C:cytoplasm"/>
    <property type="evidence" value="ECO:0007669"/>
    <property type="project" value="UniProtKB-SubCell"/>
</dbReference>
<dbReference type="GO" id="GO:0016149">
    <property type="term" value="F:translation release factor activity, codon specific"/>
    <property type="evidence" value="ECO:0007669"/>
    <property type="project" value="UniProtKB-UniRule"/>
</dbReference>
<dbReference type="FunFam" id="3.30.160.20:FF:000010">
    <property type="entry name" value="Peptide chain release factor 2"/>
    <property type="match status" value="1"/>
</dbReference>
<dbReference type="Gene3D" id="3.30.160.20">
    <property type="match status" value="1"/>
</dbReference>
<dbReference type="Gene3D" id="3.30.70.1660">
    <property type="match status" value="1"/>
</dbReference>
<dbReference type="Gene3D" id="1.20.58.410">
    <property type="entry name" value="Release factor"/>
    <property type="match status" value="1"/>
</dbReference>
<dbReference type="HAMAP" id="MF_00094">
    <property type="entry name" value="Rel_fac_2"/>
    <property type="match status" value="1"/>
</dbReference>
<dbReference type="InterPro" id="IPR005139">
    <property type="entry name" value="PCRF"/>
</dbReference>
<dbReference type="InterPro" id="IPR000352">
    <property type="entry name" value="Pep_chain_release_fac_I"/>
</dbReference>
<dbReference type="InterPro" id="IPR045853">
    <property type="entry name" value="Pep_chain_release_fac_I_sf"/>
</dbReference>
<dbReference type="InterPro" id="IPR004374">
    <property type="entry name" value="PrfB"/>
</dbReference>
<dbReference type="NCBIfam" id="TIGR00020">
    <property type="entry name" value="prfB"/>
    <property type="match status" value="1"/>
</dbReference>
<dbReference type="PANTHER" id="PTHR43116:SF3">
    <property type="entry name" value="CLASS I PEPTIDE CHAIN RELEASE FACTOR"/>
    <property type="match status" value="1"/>
</dbReference>
<dbReference type="PANTHER" id="PTHR43116">
    <property type="entry name" value="PEPTIDE CHAIN RELEASE FACTOR 2"/>
    <property type="match status" value="1"/>
</dbReference>
<dbReference type="Pfam" id="PF03462">
    <property type="entry name" value="PCRF"/>
    <property type="match status" value="1"/>
</dbReference>
<dbReference type="Pfam" id="PF00472">
    <property type="entry name" value="RF-1"/>
    <property type="match status" value="1"/>
</dbReference>
<dbReference type="SMART" id="SM00937">
    <property type="entry name" value="PCRF"/>
    <property type="match status" value="1"/>
</dbReference>
<dbReference type="SUPFAM" id="SSF75620">
    <property type="entry name" value="Release factor"/>
    <property type="match status" value="1"/>
</dbReference>
<dbReference type="PROSITE" id="PS00745">
    <property type="entry name" value="RF_PROK_I"/>
    <property type="match status" value="1"/>
</dbReference>
<feature type="chain" id="PRO_1000004999" description="Peptide chain release factor 2">
    <location>
        <begin position="1"/>
        <end position="368"/>
    </location>
</feature>
<feature type="modified residue" description="N5-methylglutamine" evidence="1">
    <location>
        <position position="250"/>
    </location>
</feature>
<sequence>MDPDRQADIAALDTTLTTVERVLDVDGLRNRIEQLEKDASDPNLWDDQTRAQKVTSDLSHAQNELRRVEGLRQRLDDLPVLYELAAEAGGPDEVAEADAELAKLREDIEAMEVRTLLSGEYDEREAVVTIRSGAGGVDAADWAEMLMRMYIRWAEKHDYPVEIFDTSYAEEAGIKSATFAVHAPFAYGTLSVEQGTHRLVRISPFDNQSRRQTSFADVEVLPVVETTDHIEIPENDIRVDVYRSSGPGGQSVNTTDSAVRLTHIPTGIVVTCQNEKSQLQNKVSAMRVLQAKLLERKRLEERAELDALKGDGGSSWGNQMRSYVLHPYQMVKDLRTEYEVGNPASVLDGDIDGFLEAGIRWRNRKDDD</sequence>
<organism>
    <name type="scientific">Mycolicibacterium smegmatis (strain ATCC 700084 / mc(2)155)</name>
    <name type="common">Mycobacterium smegmatis</name>
    <dbReference type="NCBI Taxonomy" id="246196"/>
    <lineage>
        <taxon>Bacteria</taxon>
        <taxon>Bacillati</taxon>
        <taxon>Actinomycetota</taxon>
        <taxon>Actinomycetes</taxon>
        <taxon>Mycobacteriales</taxon>
        <taxon>Mycobacteriaceae</taxon>
        <taxon>Mycolicibacterium</taxon>
    </lineage>
</organism>
<evidence type="ECO:0000255" key="1">
    <source>
        <dbReference type="HAMAP-Rule" id="MF_00094"/>
    </source>
</evidence>
<keyword id="KW-0963">Cytoplasm</keyword>
<keyword id="KW-0488">Methylation</keyword>
<keyword id="KW-0648">Protein biosynthesis</keyword>
<keyword id="KW-1185">Reference proteome</keyword>
<name>RF2_MYCS2</name>
<accession>A0QU58</accession>
<accession>I7G5P1</accession>
<protein>
    <recommendedName>
        <fullName evidence="1">Peptide chain release factor 2</fullName>
        <shortName evidence="1">RF-2</shortName>
    </recommendedName>
</protein>
<comment type="function">
    <text evidence="1">Peptide chain release factor 2 directs the termination of translation in response to the peptide chain termination codons UGA and UAA.</text>
</comment>
<comment type="subcellular location">
    <subcellularLocation>
        <location evidence="1">Cytoplasm</location>
    </subcellularLocation>
</comment>
<comment type="PTM">
    <text evidence="1">Methylated by PrmC. Methylation increases the termination efficiency of RF2.</text>
</comment>
<comment type="similarity">
    <text evidence="1">Belongs to the prokaryotic/mitochondrial release factor family.</text>
</comment>
<reference key="1">
    <citation type="submission" date="2006-10" db="EMBL/GenBank/DDBJ databases">
        <authorList>
            <person name="Fleischmann R.D."/>
            <person name="Dodson R.J."/>
            <person name="Haft D.H."/>
            <person name="Merkel J.S."/>
            <person name="Nelson W.C."/>
            <person name="Fraser C.M."/>
        </authorList>
    </citation>
    <scope>NUCLEOTIDE SEQUENCE [LARGE SCALE GENOMIC DNA]</scope>
    <source>
        <strain>ATCC 700084 / mc(2)155</strain>
    </source>
</reference>
<reference key="2">
    <citation type="journal article" date="2007" name="Genome Biol.">
        <title>Interrupted coding sequences in Mycobacterium smegmatis: authentic mutations or sequencing errors?</title>
        <authorList>
            <person name="Deshayes C."/>
            <person name="Perrodou E."/>
            <person name="Gallien S."/>
            <person name="Euphrasie D."/>
            <person name="Schaeffer C."/>
            <person name="Van-Dorsselaer A."/>
            <person name="Poch O."/>
            <person name="Lecompte O."/>
            <person name="Reyrat J.-M."/>
        </authorList>
    </citation>
    <scope>NUCLEOTIDE SEQUENCE [LARGE SCALE GENOMIC DNA]</scope>
    <source>
        <strain>ATCC 700084 / mc(2)155</strain>
    </source>
</reference>
<reference key="3">
    <citation type="journal article" date="2009" name="Genome Res.">
        <title>Ortho-proteogenomics: multiple proteomes investigation through orthology and a new MS-based protocol.</title>
        <authorList>
            <person name="Gallien S."/>
            <person name="Perrodou E."/>
            <person name="Carapito C."/>
            <person name="Deshayes C."/>
            <person name="Reyrat J.-M."/>
            <person name="Van Dorsselaer A."/>
            <person name="Poch O."/>
            <person name="Schaeffer C."/>
            <person name="Lecompte O."/>
        </authorList>
    </citation>
    <scope>NUCLEOTIDE SEQUENCE [LARGE SCALE GENOMIC DNA]</scope>
    <scope>IDENTIFICATION BY MASS SPECTROMETRY [LARGE SCALE ANALYSIS]</scope>
    <source>
        <strain>ATCC 700084 / mc(2)155</strain>
    </source>
</reference>
<gene>
    <name evidence="1" type="primary">prfB</name>
    <name type="ordered locus">MSMEG_2086</name>
    <name type="ordered locus">MSMEI_2040</name>
</gene>